<evidence type="ECO:0000255" key="1">
    <source>
        <dbReference type="HAMAP-Rule" id="MF_00473"/>
    </source>
</evidence>
<evidence type="ECO:0000269" key="2">
    <source>
    </source>
</evidence>
<evidence type="ECO:0000269" key="3">
    <source>
    </source>
</evidence>
<evidence type="ECO:0000305" key="4"/>
<organism>
    <name type="scientific">Bacillus subtilis (strain 168)</name>
    <dbReference type="NCBI Taxonomy" id="224308"/>
    <lineage>
        <taxon>Bacteria</taxon>
        <taxon>Bacillati</taxon>
        <taxon>Bacillota</taxon>
        <taxon>Bacilli</taxon>
        <taxon>Bacillales</taxon>
        <taxon>Bacillaceae</taxon>
        <taxon>Bacillus</taxon>
    </lineage>
</organism>
<keyword id="KW-0963">Cytoplasm</keyword>
<keyword id="KW-0903">Direct protein sequencing</keyword>
<keyword id="KW-0312">Gluconeogenesis</keyword>
<keyword id="KW-0324">Glycolysis</keyword>
<keyword id="KW-0413">Isomerase</keyword>
<keyword id="KW-0597">Phosphoprotein</keyword>
<keyword id="KW-1185">Reference proteome</keyword>
<sequence>MTHVRFDYSKALTFFNEHELTYLRDFVKTAHHNIHEKTGAGSDFLGWVDLPEHYDKEEFARIKKSAEKIKSDSDVLLVVGIGGSYLGARAAIEALNHAFYNTLPKAKRGNPQVIFIGNNISSSYMRDVMDLLEDVDFSINVISKSGTTTEPAIAFRIFRKLLEEKYGKEEAKARIYATTDKERGALKTLSNEEGFESFVIPDDVGGRYSVLTAVGLLPIAVSGVNIDDMMKGALDASKDFATSELEDNPAYQYAVVRNVLYNKGKTIEMLINYEPALQYFAEWWKQLFGESEGKDEKGIYPSSANYSTDLHSLGQYVQEGRRDLFETVLNVEKPKHELTIEEADNDLDGLNYLAGKTVDFVNKKAFQGTMLAHTDGNVPNLIVNIPELNAYTFGYLVYFFEKACAMSGYLLGVNPFDQPGVEAYKVNMFALLGKPGFEEKKAELEKRLED</sequence>
<dbReference type="EC" id="5.3.1.9" evidence="1"/>
<dbReference type="EMBL" id="Z93936">
    <property type="protein sequence ID" value="CAB07930.1"/>
    <property type="molecule type" value="Genomic_DNA"/>
</dbReference>
<dbReference type="EMBL" id="AL009126">
    <property type="protein sequence ID" value="CAB15124.2"/>
    <property type="molecule type" value="Genomic_DNA"/>
</dbReference>
<dbReference type="PIR" id="B69675">
    <property type="entry name" value="B69675"/>
</dbReference>
<dbReference type="RefSeq" id="NP_391013.2">
    <property type="nucleotide sequence ID" value="NC_000964.3"/>
</dbReference>
<dbReference type="RefSeq" id="WP_003243401.1">
    <property type="nucleotide sequence ID" value="NZ_OZ025638.1"/>
</dbReference>
<dbReference type="SMR" id="P80860"/>
<dbReference type="FunCoup" id="P80860">
    <property type="interactions" value="675"/>
</dbReference>
<dbReference type="IntAct" id="P80860">
    <property type="interactions" value="1"/>
</dbReference>
<dbReference type="MINT" id="P80860"/>
<dbReference type="STRING" id="224308.BSU31350"/>
<dbReference type="iPTMnet" id="P80860"/>
<dbReference type="jPOST" id="P80860"/>
<dbReference type="PaxDb" id="224308-BSU31350"/>
<dbReference type="EnsemblBacteria" id="CAB15124">
    <property type="protein sequence ID" value="CAB15124"/>
    <property type="gene ID" value="BSU_31350"/>
</dbReference>
<dbReference type="GeneID" id="937165"/>
<dbReference type="KEGG" id="bsu:BSU31350"/>
<dbReference type="PATRIC" id="fig|224308.179.peg.3399"/>
<dbReference type="eggNOG" id="COG0166">
    <property type="taxonomic scope" value="Bacteria"/>
</dbReference>
<dbReference type="InParanoid" id="P80860"/>
<dbReference type="OrthoDB" id="140919at2"/>
<dbReference type="PhylomeDB" id="P80860"/>
<dbReference type="BioCyc" id="BSUB:BSU31350-MONOMER"/>
<dbReference type="UniPathway" id="UPA00109">
    <property type="reaction ID" value="UER00181"/>
</dbReference>
<dbReference type="UniPathway" id="UPA00138"/>
<dbReference type="Proteomes" id="UP000001570">
    <property type="component" value="Chromosome"/>
</dbReference>
<dbReference type="GO" id="GO:0005829">
    <property type="term" value="C:cytosol"/>
    <property type="evidence" value="ECO:0000318"/>
    <property type="project" value="GO_Central"/>
</dbReference>
<dbReference type="GO" id="GO:0097367">
    <property type="term" value="F:carbohydrate derivative binding"/>
    <property type="evidence" value="ECO:0007669"/>
    <property type="project" value="InterPro"/>
</dbReference>
<dbReference type="GO" id="GO:0004347">
    <property type="term" value="F:glucose-6-phosphate isomerase activity"/>
    <property type="evidence" value="ECO:0000318"/>
    <property type="project" value="GO_Central"/>
</dbReference>
<dbReference type="GO" id="GO:0048029">
    <property type="term" value="F:monosaccharide binding"/>
    <property type="evidence" value="ECO:0000318"/>
    <property type="project" value="GO_Central"/>
</dbReference>
<dbReference type="GO" id="GO:0006094">
    <property type="term" value="P:gluconeogenesis"/>
    <property type="evidence" value="ECO:0000318"/>
    <property type="project" value="GO_Central"/>
</dbReference>
<dbReference type="GO" id="GO:0051156">
    <property type="term" value="P:glucose 6-phosphate metabolic process"/>
    <property type="evidence" value="ECO:0000318"/>
    <property type="project" value="GO_Central"/>
</dbReference>
<dbReference type="GO" id="GO:0006096">
    <property type="term" value="P:glycolytic process"/>
    <property type="evidence" value="ECO:0000318"/>
    <property type="project" value="GO_Central"/>
</dbReference>
<dbReference type="CDD" id="cd05015">
    <property type="entry name" value="SIS_PGI_1"/>
    <property type="match status" value="1"/>
</dbReference>
<dbReference type="CDD" id="cd05016">
    <property type="entry name" value="SIS_PGI_2"/>
    <property type="match status" value="1"/>
</dbReference>
<dbReference type="FunFam" id="3.40.50.10490:FF:000015">
    <property type="entry name" value="Glucose-6-phosphate isomerase"/>
    <property type="match status" value="1"/>
</dbReference>
<dbReference type="FunFam" id="3.40.50.10490:FF:000016">
    <property type="entry name" value="Glucose-6-phosphate isomerase"/>
    <property type="match status" value="1"/>
</dbReference>
<dbReference type="FunFam" id="3.40.50.10490:FF:000020">
    <property type="entry name" value="Glucose-6-phosphate isomerase"/>
    <property type="match status" value="1"/>
</dbReference>
<dbReference type="Gene3D" id="3.40.50.10490">
    <property type="entry name" value="Glucose-6-phosphate isomerase like protein, domain 1"/>
    <property type="match status" value="3"/>
</dbReference>
<dbReference type="HAMAP" id="MF_00473">
    <property type="entry name" value="G6P_isomerase"/>
    <property type="match status" value="1"/>
</dbReference>
<dbReference type="InterPro" id="IPR001672">
    <property type="entry name" value="G6P_Isomerase"/>
</dbReference>
<dbReference type="InterPro" id="IPR018189">
    <property type="entry name" value="Phosphoglucose_isomerase_CS"/>
</dbReference>
<dbReference type="InterPro" id="IPR046348">
    <property type="entry name" value="SIS_dom_sf"/>
</dbReference>
<dbReference type="InterPro" id="IPR035476">
    <property type="entry name" value="SIS_PGI_1"/>
</dbReference>
<dbReference type="InterPro" id="IPR035482">
    <property type="entry name" value="SIS_PGI_2"/>
</dbReference>
<dbReference type="NCBIfam" id="NF010697">
    <property type="entry name" value="PRK14097.1"/>
    <property type="match status" value="1"/>
</dbReference>
<dbReference type="PANTHER" id="PTHR11469">
    <property type="entry name" value="GLUCOSE-6-PHOSPHATE ISOMERASE"/>
    <property type="match status" value="1"/>
</dbReference>
<dbReference type="PANTHER" id="PTHR11469:SF1">
    <property type="entry name" value="GLUCOSE-6-PHOSPHATE ISOMERASE"/>
    <property type="match status" value="1"/>
</dbReference>
<dbReference type="Pfam" id="PF00342">
    <property type="entry name" value="PGI"/>
    <property type="match status" value="2"/>
</dbReference>
<dbReference type="PRINTS" id="PR00662">
    <property type="entry name" value="G6PISOMERASE"/>
</dbReference>
<dbReference type="SUPFAM" id="SSF53697">
    <property type="entry name" value="SIS domain"/>
    <property type="match status" value="1"/>
</dbReference>
<dbReference type="PROSITE" id="PS00765">
    <property type="entry name" value="P_GLUCOSE_ISOMERASE_1"/>
    <property type="match status" value="1"/>
</dbReference>
<dbReference type="PROSITE" id="PS00174">
    <property type="entry name" value="P_GLUCOSE_ISOMERASE_2"/>
    <property type="match status" value="1"/>
</dbReference>
<dbReference type="PROSITE" id="PS51463">
    <property type="entry name" value="P_GLUCOSE_ISOMERASE_3"/>
    <property type="match status" value="1"/>
</dbReference>
<name>G6PI_BACSU</name>
<gene>
    <name evidence="1" type="primary">pgi</name>
    <name type="synonym">yugL</name>
    <name type="ordered locus">BSU31350</name>
</gene>
<proteinExistence type="evidence at protein level"/>
<comment type="function">
    <text evidence="1">Catalyzes the reversible isomerization of glucose-6-phosphate to fructose-6-phosphate.</text>
</comment>
<comment type="catalytic activity">
    <reaction evidence="1">
        <text>alpha-D-glucose 6-phosphate = beta-D-fructose 6-phosphate</text>
        <dbReference type="Rhea" id="RHEA:11816"/>
        <dbReference type="ChEBI" id="CHEBI:57634"/>
        <dbReference type="ChEBI" id="CHEBI:58225"/>
        <dbReference type="EC" id="5.3.1.9"/>
    </reaction>
</comment>
<comment type="pathway">
    <text evidence="1">Carbohydrate biosynthesis; gluconeogenesis.</text>
</comment>
<comment type="pathway">
    <text evidence="1">Carbohydrate degradation; glycolysis; D-glyceraldehyde 3-phosphate and glycerone phosphate from D-glucose: step 2/4.</text>
</comment>
<comment type="subcellular location">
    <subcellularLocation>
        <location evidence="1">Cytoplasm</location>
    </subcellularLocation>
</comment>
<comment type="similarity">
    <text evidence="1 4">Belongs to the GPI family.</text>
</comment>
<reference key="1">
    <citation type="journal article" date="1997" name="Microbiology">
        <title>Analysis of the Bacillus subtilis genome: cloning and nucleotide sequence of a 62 kb region between 275 degrees (rrnB) and 284 degrees (pai).</title>
        <authorList>
            <person name="Oudega B."/>
            <person name="Koningstein G."/>
            <person name="Rodrigues L."/>
            <person name="de Sales Ramon M."/>
            <person name="Hilbert H."/>
            <person name="Duesterhoeft A."/>
            <person name="Pohl T.M."/>
            <person name="Weitzenegger T."/>
        </authorList>
    </citation>
    <scope>NUCLEOTIDE SEQUENCE [GENOMIC DNA]</scope>
    <source>
        <strain>168</strain>
    </source>
</reference>
<reference key="2">
    <citation type="journal article" date="1997" name="Nature">
        <title>The complete genome sequence of the Gram-positive bacterium Bacillus subtilis.</title>
        <authorList>
            <person name="Kunst F."/>
            <person name="Ogasawara N."/>
            <person name="Moszer I."/>
            <person name="Albertini A.M."/>
            <person name="Alloni G."/>
            <person name="Azevedo V."/>
            <person name="Bertero M.G."/>
            <person name="Bessieres P."/>
            <person name="Bolotin A."/>
            <person name="Borchert S."/>
            <person name="Borriss R."/>
            <person name="Boursier L."/>
            <person name="Brans A."/>
            <person name="Braun M."/>
            <person name="Brignell S.C."/>
            <person name="Bron S."/>
            <person name="Brouillet S."/>
            <person name="Bruschi C.V."/>
            <person name="Caldwell B."/>
            <person name="Capuano V."/>
            <person name="Carter N.M."/>
            <person name="Choi S.-K."/>
            <person name="Codani J.-J."/>
            <person name="Connerton I.F."/>
            <person name="Cummings N.J."/>
            <person name="Daniel R.A."/>
            <person name="Denizot F."/>
            <person name="Devine K.M."/>
            <person name="Duesterhoeft A."/>
            <person name="Ehrlich S.D."/>
            <person name="Emmerson P.T."/>
            <person name="Entian K.-D."/>
            <person name="Errington J."/>
            <person name="Fabret C."/>
            <person name="Ferrari E."/>
            <person name="Foulger D."/>
            <person name="Fritz C."/>
            <person name="Fujita M."/>
            <person name="Fujita Y."/>
            <person name="Fuma S."/>
            <person name="Galizzi A."/>
            <person name="Galleron N."/>
            <person name="Ghim S.-Y."/>
            <person name="Glaser P."/>
            <person name="Goffeau A."/>
            <person name="Golightly E.J."/>
            <person name="Grandi G."/>
            <person name="Guiseppi G."/>
            <person name="Guy B.J."/>
            <person name="Haga K."/>
            <person name="Haiech J."/>
            <person name="Harwood C.R."/>
            <person name="Henaut A."/>
            <person name="Hilbert H."/>
            <person name="Holsappel S."/>
            <person name="Hosono S."/>
            <person name="Hullo M.-F."/>
            <person name="Itaya M."/>
            <person name="Jones L.-M."/>
            <person name="Joris B."/>
            <person name="Karamata D."/>
            <person name="Kasahara Y."/>
            <person name="Klaerr-Blanchard M."/>
            <person name="Klein C."/>
            <person name="Kobayashi Y."/>
            <person name="Koetter P."/>
            <person name="Koningstein G."/>
            <person name="Krogh S."/>
            <person name="Kumano M."/>
            <person name="Kurita K."/>
            <person name="Lapidus A."/>
            <person name="Lardinois S."/>
            <person name="Lauber J."/>
            <person name="Lazarevic V."/>
            <person name="Lee S.-M."/>
            <person name="Levine A."/>
            <person name="Liu H."/>
            <person name="Masuda S."/>
            <person name="Mauel C."/>
            <person name="Medigue C."/>
            <person name="Medina N."/>
            <person name="Mellado R.P."/>
            <person name="Mizuno M."/>
            <person name="Moestl D."/>
            <person name="Nakai S."/>
            <person name="Noback M."/>
            <person name="Noone D."/>
            <person name="O'Reilly M."/>
            <person name="Ogawa K."/>
            <person name="Ogiwara A."/>
            <person name="Oudega B."/>
            <person name="Park S.-H."/>
            <person name="Parro V."/>
            <person name="Pohl T.M."/>
            <person name="Portetelle D."/>
            <person name="Porwollik S."/>
            <person name="Prescott A.M."/>
            <person name="Presecan E."/>
            <person name="Pujic P."/>
            <person name="Purnelle B."/>
            <person name="Rapoport G."/>
            <person name="Rey M."/>
            <person name="Reynolds S."/>
            <person name="Rieger M."/>
            <person name="Rivolta C."/>
            <person name="Rocha E."/>
            <person name="Roche B."/>
            <person name="Rose M."/>
            <person name="Sadaie Y."/>
            <person name="Sato T."/>
            <person name="Scanlan E."/>
            <person name="Schleich S."/>
            <person name="Schroeter R."/>
            <person name="Scoffone F."/>
            <person name="Sekiguchi J."/>
            <person name="Sekowska A."/>
            <person name="Seror S.J."/>
            <person name="Serror P."/>
            <person name="Shin B.-S."/>
            <person name="Soldo B."/>
            <person name="Sorokin A."/>
            <person name="Tacconi E."/>
            <person name="Takagi T."/>
            <person name="Takahashi H."/>
            <person name="Takemaru K."/>
            <person name="Takeuchi M."/>
            <person name="Tamakoshi A."/>
            <person name="Tanaka T."/>
            <person name="Terpstra P."/>
            <person name="Tognoni A."/>
            <person name="Tosato V."/>
            <person name="Uchiyama S."/>
            <person name="Vandenbol M."/>
            <person name="Vannier F."/>
            <person name="Vassarotti A."/>
            <person name="Viari A."/>
            <person name="Wambutt R."/>
            <person name="Wedler E."/>
            <person name="Wedler H."/>
            <person name="Weitzenegger T."/>
            <person name="Winters P."/>
            <person name="Wipat A."/>
            <person name="Yamamoto H."/>
            <person name="Yamane K."/>
            <person name="Yasumoto K."/>
            <person name="Yata K."/>
            <person name="Yoshida K."/>
            <person name="Yoshikawa H.-F."/>
            <person name="Zumstein E."/>
            <person name="Yoshikawa H."/>
            <person name="Danchin A."/>
        </authorList>
    </citation>
    <scope>NUCLEOTIDE SEQUENCE [LARGE SCALE GENOMIC DNA]</scope>
    <source>
        <strain>168</strain>
    </source>
</reference>
<reference key="3">
    <citation type="journal article" date="2009" name="Microbiology">
        <title>From a consortium sequence to a unified sequence: the Bacillus subtilis 168 reference genome a decade later.</title>
        <authorList>
            <person name="Barbe V."/>
            <person name="Cruveiller S."/>
            <person name="Kunst F."/>
            <person name="Lenoble P."/>
            <person name="Meurice G."/>
            <person name="Sekowska A."/>
            <person name="Vallenet D."/>
            <person name="Wang T."/>
            <person name="Moszer I."/>
            <person name="Medigue C."/>
            <person name="Danchin A."/>
        </authorList>
    </citation>
    <scope>SEQUENCE REVISION TO 6-9; 16; 63 AND 70</scope>
</reference>
<reference key="4">
    <citation type="journal article" date="1997" name="Electrophoresis">
        <title>First steps from a two-dimensional protein index towards a response-regulation map for Bacillus subtilis.</title>
        <authorList>
            <person name="Antelmann H."/>
            <person name="Bernhardt J."/>
            <person name="Schmid R."/>
            <person name="Mach H."/>
            <person name="Voelker U."/>
            <person name="Hecker M."/>
        </authorList>
    </citation>
    <scope>PROTEIN SEQUENCE OF 2-11</scope>
    <source>
        <strain>168 / IS58</strain>
    </source>
</reference>
<reference key="5">
    <citation type="journal article" date="2007" name="Mol. Cell. Proteomics">
        <title>The serine/threonine/tyrosine phosphoproteome of the model bacterium Bacillus subtilis.</title>
        <authorList>
            <person name="Macek B."/>
            <person name="Mijakovic I."/>
            <person name="Olsen J.V."/>
            <person name="Gnad F."/>
            <person name="Kumar C."/>
            <person name="Jensen P.R."/>
            <person name="Mann M."/>
        </authorList>
    </citation>
    <scope>PHOSPHORYLATION [LARGE SCALE ANALYSIS] AT THR-38</scope>
    <scope>IDENTIFICATION BY MASS SPECTROMETRY</scope>
    <source>
        <strain>168</strain>
    </source>
</reference>
<accession>P80860</accession>
<accession>O08330</accession>
<protein>
    <recommendedName>
        <fullName evidence="1">Glucose-6-phosphate isomerase</fullName>
        <shortName evidence="1">GPI</shortName>
        <ecNumber evidence="1">5.3.1.9</ecNumber>
    </recommendedName>
    <alternativeName>
        <fullName evidence="1">Phosphoglucose isomerase</fullName>
        <shortName evidence="1">PGI</shortName>
    </alternativeName>
    <alternativeName>
        <fullName evidence="1">Phosphohexose isomerase</fullName>
        <shortName evidence="1">PHI</shortName>
    </alternativeName>
    <alternativeName>
        <fullName>Vegetative protein 54</fullName>
        <shortName>VEG54</shortName>
    </alternativeName>
</protein>
<feature type="initiator methionine" description="Removed" evidence="3">
    <location>
        <position position="1"/>
    </location>
</feature>
<feature type="chain" id="PRO_0000180593" description="Glucose-6-phosphate isomerase">
    <location>
        <begin position="2"/>
        <end position="450"/>
    </location>
</feature>
<feature type="active site" description="Proton donor" evidence="1">
    <location>
        <position position="290"/>
    </location>
</feature>
<feature type="active site" evidence="1">
    <location>
        <position position="311"/>
    </location>
</feature>
<feature type="active site" evidence="1">
    <location>
        <position position="425"/>
    </location>
</feature>
<feature type="modified residue" description="Phosphothreonine" evidence="1 2">
    <location>
        <position position="38"/>
    </location>
</feature>
<feature type="sequence conflict" description="In Ref. 1; CAB07930." evidence="4" ref="1">
    <original>FDYS</original>
    <variation>LTTP</variation>
    <location>
        <begin position="6"/>
        <end position="9"/>
    </location>
</feature>
<feature type="sequence conflict" description="In Ref. 1; CAB07930." evidence="4" ref="1">
    <original>N</original>
    <variation>PT</variation>
    <location>
        <position position="16"/>
    </location>
</feature>
<feature type="sequence conflict" description="In Ref. 1; CAB07930." evidence="4" ref="1">
    <original>K</original>
    <variation>Q</variation>
    <location>
        <position position="63"/>
    </location>
</feature>
<feature type="sequence conflict" description="In Ref. 1; CAB07930." evidence="4" ref="1">
    <original>K</original>
    <variation>Q</variation>
    <location>
        <position position="70"/>
    </location>
</feature>